<reference key="1">
    <citation type="journal article" date="1997" name="Nature">
        <title>The complete genome sequence of the hyperthermophilic, sulphate-reducing archaeon Archaeoglobus fulgidus.</title>
        <authorList>
            <person name="Klenk H.-P."/>
            <person name="Clayton R.A."/>
            <person name="Tomb J.-F."/>
            <person name="White O."/>
            <person name="Nelson K.E."/>
            <person name="Ketchum K.A."/>
            <person name="Dodson R.J."/>
            <person name="Gwinn M.L."/>
            <person name="Hickey E.K."/>
            <person name="Peterson J.D."/>
            <person name="Richardson D.L."/>
            <person name="Kerlavage A.R."/>
            <person name="Graham D.E."/>
            <person name="Kyrpides N.C."/>
            <person name="Fleischmann R.D."/>
            <person name="Quackenbush J."/>
            <person name="Lee N.H."/>
            <person name="Sutton G.G."/>
            <person name="Gill S.R."/>
            <person name="Kirkness E.F."/>
            <person name="Dougherty B.A."/>
            <person name="McKenney K."/>
            <person name="Adams M.D."/>
            <person name="Loftus B.J."/>
            <person name="Peterson S.N."/>
            <person name="Reich C.I."/>
            <person name="McNeil L.K."/>
            <person name="Badger J.H."/>
            <person name="Glodek A."/>
            <person name="Zhou L."/>
            <person name="Overbeek R."/>
            <person name="Gocayne J.D."/>
            <person name="Weidman J.F."/>
            <person name="McDonald L.A."/>
            <person name="Utterback T.R."/>
            <person name="Cotton M.D."/>
            <person name="Spriggs T."/>
            <person name="Artiach P."/>
            <person name="Kaine B.P."/>
            <person name="Sykes S.M."/>
            <person name="Sadow P.W."/>
            <person name="D'Andrea K.P."/>
            <person name="Bowman C."/>
            <person name="Fujii C."/>
            <person name="Garland S.A."/>
            <person name="Mason T.M."/>
            <person name="Olsen G.J."/>
            <person name="Fraser C.M."/>
            <person name="Smith H.O."/>
            <person name="Woese C.R."/>
            <person name="Venter J.C."/>
        </authorList>
    </citation>
    <scope>NUCLEOTIDE SEQUENCE [LARGE SCALE GENOMIC DNA]</scope>
    <source>
        <strain>ATCC 49558 / DSM 4304 / JCM 9628 / NBRC 100126 / VC-16</strain>
    </source>
</reference>
<evidence type="ECO:0000255" key="1"/>
<evidence type="ECO:0000305" key="2"/>
<organism>
    <name type="scientific">Archaeoglobus fulgidus (strain ATCC 49558 / DSM 4304 / JCM 9628 / NBRC 100126 / VC-16)</name>
    <dbReference type="NCBI Taxonomy" id="224325"/>
    <lineage>
        <taxon>Archaea</taxon>
        <taxon>Methanobacteriati</taxon>
        <taxon>Methanobacteriota</taxon>
        <taxon>Archaeoglobi</taxon>
        <taxon>Archaeoglobales</taxon>
        <taxon>Archaeoglobaceae</taxon>
        <taxon>Archaeoglobus</taxon>
    </lineage>
</organism>
<feature type="chain" id="PRO_0000128086" description="Uncharacterized protein AF_2041">
    <location>
        <begin position="1"/>
        <end position="162"/>
    </location>
</feature>
<feature type="transmembrane region" description="Helical" evidence="1">
    <location>
        <begin position="15"/>
        <end position="40"/>
    </location>
</feature>
<feature type="transmembrane region" description="Helical" evidence="1">
    <location>
        <begin position="47"/>
        <end position="66"/>
    </location>
</feature>
<feature type="transmembrane region" description="Helical" evidence="1">
    <location>
        <begin position="76"/>
        <end position="98"/>
    </location>
</feature>
<feature type="transmembrane region" description="Helical" evidence="1">
    <location>
        <begin position="105"/>
        <end position="124"/>
    </location>
</feature>
<feature type="transmembrane region" description="Helical" evidence="1">
    <location>
        <begin position="128"/>
        <end position="150"/>
    </location>
</feature>
<protein>
    <recommendedName>
        <fullName>Uncharacterized protein AF_2041</fullName>
    </recommendedName>
</protein>
<dbReference type="EMBL" id="AE000782">
    <property type="protein sequence ID" value="AAB89222.1"/>
    <property type="molecule type" value="Genomic_DNA"/>
</dbReference>
<dbReference type="PIR" id="H69504">
    <property type="entry name" value="H69504"/>
</dbReference>
<dbReference type="SMR" id="O28238"/>
<dbReference type="PaxDb" id="224325-AF_2041"/>
<dbReference type="DNASU" id="1485268"/>
<dbReference type="EnsemblBacteria" id="AAB89222">
    <property type="protein sequence ID" value="AAB89222"/>
    <property type="gene ID" value="AF_2041"/>
</dbReference>
<dbReference type="KEGG" id="afu:AF_2041"/>
<dbReference type="eggNOG" id="arCOG07533">
    <property type="taxonomic scope" value="Archaea"/>
</dbReference>
<dbReference type="HOGENOM" id="CLU_098561_0_0_2"/>
<dbReference type="Proteomes" id="UP000002199">
    <property type="component" value="Chromosome"/>
</dbReference>
<dbReference type="GO" id="GO:0005886">
    <property type="term" value="C:plasma membrane"/>
    <property type="evidence" value="ECO:0007669"/>
    <property type="project" value="UniProtKB-SubCell"/>
</dbReference>
<dbReference type="InterPro" id="IPR025495">
    <property type="entry name" value="DUF4386"/>
</dbReference>
<dbReference type="Pfam" id="PF14329">
    <property type="entry name" value="DUF4386"/>
    <property type="match status" value="2"/>
</dbReference>
<accession>O28238</accession>
<proteinExistence type="predicted"/>
<sequence>MSVLAIIFLLNLKPTIYSIVGIFLIIILDVTVAVALYFLLRPVSKNISMLMSLFRIVYAAIFTTALYKIHDLTAFYSILDLGYIFFGIHLFLLGFLVYKSGYMPKWLGALIFIASTGYIIDPLLRFSGYAVEIGMYTFFGEVLFAFWLVIKGRKLSEVVSTP</sequence>
<gene>
    <name type="ordered locus">AF_2041</name>
</gene>
<comment type="subcellular location">
    <subcellularLocation>
        <location evidence="2">Cell membrane</location>
        <topology evidence="2">Multi-pass membrane protein</topology>
    </subcellularLocation>
</comment>
<name>Y2041_ARCFU</name>
<keyword id="KW-1003">Cell membrane</keyword>
<keyword id="KW-0472">Membrane</keyword>
<keyword id="KW-1185">Reference proteome</keyword>
<keyword id="KW-0812">Transmembrane</keyword>
<keyword id="KW-1133">Transmembrane helix</keyword>